<sequence>MTNIIDQINAEQMQGKEIPDFNPGDTVLVQVKVIEGNRERLQAFEGVVIAKRNRGLNSAFTVRKISHNVGVERVFQTYSPIVDSITVKRRGDVRRAKLYYLRNLAGRAARIKEKLSGKKGD</sequence>
<evidence type="ECO:0000255" key="1">
    <source>
        <dbReference type="HAMAP-Rule" id="MF_00402"/>
    </source>
</evidence>
<evidence type="ECO:0000305" key="2"/>
<keyword id="KW-0687">Ribonucleoprotein</keyword>
<keyword id="KW-0689">Ribosomal protein</keyword>
<protein>
    <recommendedName>
        <fullName evidence="1">Large ribosomal subunit protein bL19</fullName>
    </recommendedName>
    <alternativeName>
        <fullName evidence="2">50S ribosomal protein L19</fullName>
    </alternativeName>
</protein>
<accession>Q5WZE3</accession>
<gene>
    <name evidence="1" type="primary">rplS</name>
    <name type="ordered locus">lpl0439</name>
</gene>
<name>RL19_LEGPL</name>
<organism>
    <name type="scientific">Legionella pneumophila (strain Lens)</name>
    <dbReference type="NCBI Taxonomy" id="297245"/>
    <lineage>
        <taxon>Bacteria</taxon>
        <taxon>Pseudomonadati</taxon>
        <taxon>Pseudomonadota</taxon>
        <taxon>Gammaproteobacteria</taxon>
        <taxon>Legionellales</taxon>
        <taxon>Legionellaceae</taxon>
        <taxon>Legionella</taxon>
    </lineage>
</organism>
<dbReference type="EMBL" id="CR628337">
    <property type="protein sequence ID" value="CAH14669.1"/>
    <property type="molecule type" value="Genomic_DNA"/>
</dbReference>
<dbReference type="RefSeq" id="WP_010946144.1">
    <property type="nucleotide sequence ID" value="NC_006369.1"/>
</dbReference>
<dbReference type="SMR" id="Q5WZE3"/>
<dbReference type="GeneID" id="57034399"/>
<dbReference type="KEGG" id="lpf:lpl0439"/>
<dbReference type="LegioList" id="lpl0439"/>
<dbReference type="HOGENOM" id="CLU_103507_1_0_6"/>
<dbReference type="Proteomes" id="UP000002517">
    <property type="component" value="Chromosome"/>
</dbReference>
<dbReference type="GO" id="GO:0022625">
    <property type="term" value="C:cytosolic large ribosomal subunit"/>
    <property type="evidence" value="ECO:0007669"/>
    <property type="project" value="TreeGrafter"/>
</dbReference>
<dbReference type="GO" id="GO:0003735">
    <property type="term" value="F:structural constituent of ribosome"/>
    <property type="evidence" value="ECO:0007669"/>
    <property type="project" value="InterPro"/>
</dbReference>
<dbReference type="GO" id="GO:0006412">
    <property type="term" value="P:translation"/>
    <property type="evidence" value="ECO:0007669"/>
    <property type="project" value="UniProtKB-UniRule"/>
</dbReference>
<dbReference type="FunFam" id="2.30.30.790:FF:000001">
    <property type="entry name" value="50S ribosomal protein L19"/>
    <property type="match status" value="1"/>
</dbReference>
<dbReference type="Gene3D" id="2.30.30.790">
    <property type="match status" value="1"/>
</dbReference>
<dbReference type="HAMAP" id="MF_00402">
    <property type="entry name" value="Ribosomal_bL19"/>
    <property type="match status" value="1"/>
</dbReference>
<dbReference type="InterPro" id="IPR001857">
    <property type="entry name" value="Ribosomal_bL19"/>
</dbReference>
<dbReference type="InterPro" id="IPR018257">
    <property type="entry name" value="Ribosomal_bL19_CS"/>
</dbReference>
<dbReference type="InterPro" id="IPR038657">
    <property type="entry name" value="Ribosomal_bL19_sf"/>
</dbReference>
<dbReference type="InterPro" id="IPR008991">
    <property type="entry name" value="Translation_prot_SH3-like_sf"/>
</dbReference>
<dbReference type="NCBIfam" id="TIGR01024">
    <property type="entry name" value="rplS_bact"/>
    <property type="match status" value="1"/>
</dbReference>
<dbReference type="PANTHER" id="PTHR15680:SF9">
    <property type="entry name" value="LARGE RIBOSOMAL SUBUNIT PROTEIN BL19M"/>
    <property type="match status" value="1"/>
</dbReference>
<dbReference type="PANTHER" id="PTHR15680">
    <property type="entry name" value="RIBOSOMAL PROTEIN L19"/>
    <property type="match status" value="1"/>
</dbReference>
<dbReference type="Pfam" id="PF01245">
    <property type="entry name" value="Ribosomal_L19"/>
    <property type="match status" value="1"/>
</dbReference>
<dbReference type="PIRSF" id="PIRSF002191">
    <property type="entry name" value="Ribosomal_L19"/>
    <property type="match status" value="1"/>
</dbReference>
<dbReference type="PRINTS" id="PR00061">
    <property type="entry name" value="RIBOSOMALL19"/>
</dbReference>
<dbReference type="SUPFAM" id="SSF50104">
    <property type="entry name" value="Translation proteins SH3-like domain"/>
    <property type="match status" value="1"/>
</dbReference>
<dbReference type="PROSITE" id="PS01015">
    <property type="entry name" value="RIBOSOMAL_L19"/>
    <property type="match status" value="1"/>
</dbReference>
<proteinExistence type="inferred from homology"/>
<feature type="chain" id="PRO_0000163473" description="Large ribosomal subunit protein bL19">
    <location>
        <begin position="1"/>
        <end position="121"/>
    </location>
</feature>
<reference key="1">
    <citation type="journal article" date="2004" name="Nat. Genet.">
        <title>Evidence in the Legionella pneumophila genome for exploitation of host cell functions and high genome plasticity.</title>
        <authorList>
            <person name="Cazalet C."/>
            <person name="Rusniok C."/>
            <person name="Brueggemann H."/>
            <person name="Zidane N."/>
            <person name="Magnier A."/>
            <person name="Ma L."/>
            <person name="Tichit M."/>
            <person name="Jarraud S."/>
            <person name="Bouchier C."/>
            <person name="Vandenesch F."/>
            <person name="Kunst F."/>
            <person name="Etienne J."/>
            <person name="Glaser P."/>
            <person name="Buchrieser C."/>
        </authorList>
    </citation>
    <scope>NUCLEOTIDE SEQUENCE [LARGE SCALE GENOMIC DNA]</scope>
    <source>
        <strain>Lens</strain>
    </source>
</reference>
<comment type="function">
    <text evidence="1">This protein is located at the 30S-50S ribosomal subunit interface and may play a role in the structure and function of the aminoacyl-tRNA binding site.</text>
</comment>
<comment type="similarity">
    <text evidence="1">Belongs to the bacterial ribosomal protein bL19 family.</text>
</comment>